<comment type="function">
    <text evidence="1 2">Shows cytolytic activity on many different cells by forming pore in lipid membranes. In vivo, increases heart rate or kills the animal by cardiac arrest. In addition, it binds to heparin with high affinity, interacts with Kv channel-interacting protein 1 (KCNIP1) in a calcium-independent manner, and binds to integrin alpha-V/beta-3 (ITGAV/ITGB3) with moderate affinity.</text>
</comment>
<comment type="subunit">
    <text evidence="1">Monomer in solution; Homodimer and oligomer in the presence of negatively charged lipids forming a pore with a size ranging between 20 and 30 Angstroms.</text>
</comment>
<comment type="subcellular location">
    <subcellularLocation>
        <location evidence="4">Secreted</location>
    </subcellularLocation>
    <subcellularLocation>
        <location evidence="1">Target cell membrane</location>
    </subcellularLocation>
</comment>
<comment type="tissue specificity">
    <text evidence="6">Expressed by the venom gland.</text>
</comment>
<comment type="toxic dose">
    <text evidence="4">LD(50) is 1.37 mg/kg by intravenous injection.</text>
</comment>
<comment type="miscellaneous">
    <text evidence="6">Is classified as a S-type cytotoxin, since a serine residue stands at position 28 (Ser-29 in standard classification).</text>
</comment>
<comment type="similarity">
    <text evidence="6">Belongs to the three-finger toxin family. Short-chain subfamily. Type IA cytotoxin sub-subfamily.</text>
</comment>
<name>3SA1_NAJME</name>
<dbReference type="PIR" id="A01714">
    <property type="entry name" value="H3NJ1W"/>
</dbReference>
<dbReference type="BMRB" id="P01448"/>
<dbReference type="SMR" id="P01448"/>
<dbReference type="GO" id="GO:0005576">
    <property type="term" value="C:extracellular region"/>
    <property type="evidence" value="ECO:0007669"/>
    <property type="project" value="UniProtKB-SubCell"/>
</dbReference>
<dbReference type="GO" id="GO:0016020">
    <property type="term" value="C:membrane"/>
    <property type="evidence" value="ECO:0007669"/>
    <property type="project" value="UniProtKB-KW"/>
</dbReference>
<dbReference type="GO" id="GO:0044218">
    <property type="term" value="C:other organism cell membrane"/>
    <property type="evidence" value="ECO:0007669"/>
    <property type="project" value="UniProtKB-KW"/>
</dbReference>
<dbReference type="GO" id="GO:0090729">
    <property type="term" value="F:toxin activity"/>
    <property type="evidence" value="ECO:0007669"/>
    <property type="project" value="UniProtKB-KW"/>
</dbReference>
<dbReference type="GO" id="GO:0031640">
    <property type="term" value="P:killing of cells of another organism"/>
    <property type="evidence" value="ECO:0007669"/>
    <property type="project" value="UniProtKB-KW"/>
</dbReference>
<dbReference type="CDD" id="cd00206">
    <property type="entry name" value="TFP_snake_toxin"/>
    <property type="match status" value="1"/>
</dbReference>
<dbReference type="FunFam" id="2.10.60.10:FF:000024">
    <property type="entry name" value="Cytotoxin 1"/>
    <property type="match status" value="1"/>
</dbReference>
<dbReference type="Gene3D" id="2.10.60.10">
    <property type="entry name" value="CD59"/>
    <property type="match status" value="1"/>
</dbReference>
<dbReference type="InterPro" id="IPR003572">
    <property type="entry name" value="Cytotoxin_Cobra"/>
</dbReference>
<dbReference type="InterPro" id="IPR003571">
    <property type="entry name" value="Snake_3FTx"/>
</dbReference>
<dbReference type="InterPro" id="IPR045860">
    <property type="entry name" value="Snake_toxin-like_sf"/>
</dbReference>
<dbReference type="InterPro" id="IPR018354">
    <property type="entry name" value="Snake_toxin_con_site"/>
</dbReference>
<dbReference type="InterPro" id="IPR054131">
    <property type="entry name" value="Toxin_cobra-type"/>
</dbReference>
<dbReference type="Pfam" id="PF21947">
    <property type="entry name" value="Toxin_cobra-type"/>
    <property type="match status" value="1"/>
</dbReference>
<dbReference type="PRINTS" id="PR00282">
    <property type="entry name" value="CYTOTOXIN"/>
</dbReference>
<dbReference type="SUPFAM" id="SSF57302">
    <property type="entry name" value="Snake toxin-like"/>
    <property type="match status" value="1"/>
</dbReference>
<dbReference type="PROSITE" id="PS00272">
    <property type="entry name" value="SNAKE_TOXIN"/>
    <property type="match status" value="1"/>
</dbReference>
<keyword id="KW-0123">Cardiotoxin</keyword>
<keyword id="KW-0204">Cytolysis</keyword>
<keyword id="KW-0903">Direct protein sequencing</keyword>
<keyword id="KW-1015">Disulfide bond</keyword>
<keyword id="KW-0472">Membrane</keyword>
<keyword id="KW-0964">Secreted</keyword>
<keyword id="KW-1052">Target cell membrane</keyword>
<keyword id="KW-1053">Target membrane</keyword>
<keyword id="KW-0800">Toxin</keyword>
<protein>
    <recommendedName>
        <fullName>Cytotoxin 1</fullName>
    </recommendedName>
    <alternativeName>
        <fullName evidence="5">Cytotoxin V(II)1</fullName>
    </alternativeName>
</protein>
<accession>P01448</accession>
<reference key="1">
    <citation type="journal article" date="1974" name="Biochim. Biophys. Acta">
        <title>Snake venom toxins. The isolation and purification of three cytotoxin homologues from the venom of the forest cobra (Naja melanoleuca) and the complete amino acid sequence of toxin V(II)1.</title>
        <authorList>
            <person name="Carlsson F.H.H."/>
            <person name="Joubert F.J."/>
        </authorList>
    </citation>
    <scope>PROTEIN SEQUENCE</scope>
    <scope>TOXIC DOSE</scope>
    <scope>SUBCELLULAR LOCATION</scope>
    <source>
        <tissue>Venom</tissue>
    </source>
</reference>
<reference key="2">
    <citation type="journal article" date="1978" name="Biochim. Biophys. Acta">
        <title>The oxidation of methionine and its effect of the properties of cardiotoxin VII1 from Naja melanoleuca venom.</title>
        <authorList>
            <person name="Carlsson F.H."/>
            <person name="Louw A.I."/>
        </authorList>
    </citation>
    <scope>SITES MET-24 AND MET-26</scope>
    <source>
        <tissue>Venom</tissue>
    </source>
</reference>
<organism>
    <name type="scientific">Naja melanoleuca</name>
    <name type="common">Forest cobra</name>
    <name type="synonym">Black-lipped cobra</name>
    <dbReference type="NCBI Taxonomy" id="8643"/>
    <lineage>
        <taxon>Eukaryota</taxon>
        <taxon>Metazoa</taxon>
        <taxon>Chordata</taxon>
        <taxon>Craniata</taxon>
        <taxon>Vertebrata</taxon>
        <taxon>Euteleostomi</taxon>
        <taxon>Lepidosauria</taxon>
        <taxon>Squamata</taxon>
        <taxon>Bifurcata</taxon>
        <taxon>Unidentata</taxon>
        <taxon>Episquamata</taxon>
        <taxon>Toxicofera</taxon>
        <taxon>Serpentes</taxon>
        <taxon>Colubroidea</taxon>
        <taxon>Elapidae</taxon>
        <taxon>Elapinae</taxon>
        <taxon>Naja</taxon>
    </lineage>
</organism>
<sequence length="60" mass="6682">LECNKLVPIAHKTCPAGKNLCYQMYMVSKSTIPVKRGCIDVCPKSSLLVKYVCCNTDRCN</sequence>
<proteinExistence type="evidence at protein level"/>
<evidence type="ECO:0000250" key="1">
    <source>
        <dbReference type="UniProtKB" id="P60301"/>
    </source>
</evidence>
<evidence type="ECO:0000250" key="2">
    <source>
        <dbReference type="UniProtKB" id="P60304"/>
    </source>
</evidence>
<evidence type="ECO:0000269" key="3">
    <source>
    </source>
</evidence>
<evidence type="ECO:0000269" key="4">
    <source ref="1"/>
</evidence>
<evidence type="ECO:0000303" key="5">
    <source ref="1"/>
</evidence>
<evidence type="ECO:0000305" key="6"/>
<feature type="chain" id="PRO_0000093502" description="Cytotoxin 1" evidence="4">
    <location>
        <begin position="1"/>
        <end position="60"/>
    </location>
</feature>
<feature type="site" description="Important for cytolytic activity" evidence="3">
    <location>
        <position position="24"/>
    </location>
</feature>
<feature type="site" description="Important for cytolytic activity" evidence="3">
    <location>
        <position position="26"/>
    </location>
</feature>
<feature type="disulfide bond" evidence="1">
    <location>
        <begin position="3"/>
        <end position="21"/>
    </location>
</feature>
<feature type="disulfide bond" evidence="1">
    <location>
        <begin position="14"/>
        <end position="38"/>
    </location>
</feature>
<feature type="disulfide bond" evidence="1">
    <location>
        <begin position="42"/>
        <end position="53"/>
    </location>
</feature>
<feature type="disulfide bond" evidence="1">
    <location>
        <begin position="54"/>
        <end position="59"/>
    </location>
</feature>
<feature type="sequence variant" description="In equal amount.">
    <original>L</original>
    <variation>I</variation>
    <location>
        <position position="1"/>
    </location>
</feature>